<sequence>MWLLPALLLLCLSGCLSLKGPGSVTGTAGDSLTVWCQYESMYKGYNKYWCRGQYDTSCESIVETKGEEKVERNGRVSIRDHPEALAFTVTMQNLNEDDAGSYWCKIQTVWVLDSWSRDPSDLVRVYVSPAITTPRRTTHPATPPIFLVVNPGRNLSTGEVLTQNSGFRLSSPHFLLVVLLKLPLLLSMLGAVFWVNRPQWAPPGR</sequence>
<protein>
    <recommendedName>
        <fullName>CMRF35-like molecule 2</fullName>
        <shortName>CLM-2</shortName>
    </recommendedName>
    <alternativeName>
        <fullName>CD300 antigen-like family member E</fullName>
    </alternativeName>
    <alternativeName>
        <fullName>CMRF35-A5</fullName>
    </alternativeName>
    <alternativeName>
        <fullName>Immune receptor expressed on myeloid cells 2</fullName>
        <shortName>IREM-2</shortName>
    </alternativeName>
    <alternativeName>
        <fullName>Polymeric immunoglobulin receptor 2</fullName>
        <shortName>PIgR-2</shortName>
        <shortName>PIgR2</shortName>
        <shortName>Poly-Ig receptor 2</shortName>
    </alternativeName>
    <cdAntigenName>CD300e</cdAntigenName>
</protein>
<keyword id="KW-1003">Cell membrane</keyword>
<keyword id="KW-1015">Disulfide bond</keyword>
<keyword id="KW-0325">Glycoprotein</keyword>
<keyword id="KW-0391">Immunity</keyword>
<keyword id="KW-0393">Immunoglobulin domain</keyword>
<keyword id="KW-0472">Membrane</keyword>
<keyword id="KW-1267">Proteomics identification</keyword>
<keyword id="KW-0675">Receptor</keyword>
<keyword id="KW-1185">Reference proteome</keyword>
<keyword id="KW-0732">Signal</keyword>
<keyword id="KW-0812">Transmembrane</keyword>
<keyword id="KW-1133">Transmembrane helix</keyword>
<accession>Q496F6</accession>
<accession>B4DNS1</accession>
<accession>Q7Z7I3</accession>
<evidence type="ECO:0000255" key="1"/>
<evidence type="ECO:0000255" key="2">
    <source>
        <dbReference type="PROSITE-ProRule" id="PRU00114"/>
    </source>
</evidence>
<evidence type="ECO:0000269" key="3">
    <source>
    </source>
</evidence>
<evidence type="ECO:0000269" key="4">
    <source>
    </source>
</evidence>
<evidence type="ECO:0000269" key="5">
    <source>
    </source>
</evidence>
<evidence type="ECO:0000269" key="6">
    <source ref="4"/>
</evidence>
<evidence type="ECO:0000305" key="7"/>
<dbReference type="EMBL" id="AF395839">
    <property type="protein sequence ID" value="AAP42154.1"/>
    <property type="molecule type" value="mRNA"/>
</dbReference>
<dbReference type="EMBL" id="AK298031">
    <property type="protein sequence ID" value="BAG60333.1"/>
    <property type="molecule type" value="mRNA"/>
</dbReference>
<dbReference type="EMBL" id="AC064805">
    <property type="status" value="NOT_ANNOTATED_CDS"/>
    <property type="molecule type" value="Genomic_DNA"/>
</dbReference>
<dbReference type="EMBL" id="CH471099">
    <property type="protein sequence ID" value="EAW89176.1"/>
    <property type="molecule type" value="Genomic_DNA"/>
</dbReference>
<dbReference type="EMBL" id="BC100888">
    <property type="protein sequence ID" value="AAI00889.1"/>
    <property type="molecule type" value="mRNA"/>
</dbReference>
<dbReference type="EMBL" id="BC100889">
    <property type="protein sequence ID" value="AAI00890.1"/>
    <property type="molecule type" value="mRNA"/>
</dbReference>
<dbReference type="EMBL" id="BC100890">
    <property type="protein sequence ID" value="AAI00891.1"/>
    <property type="molecule type" value="mRNA"/>
</dbReference>
<dbReference type="CCDS" id="CCDS11702.1"/>
<dbReference type="RefSeq" id="NP_852114.2">
    <property type="nucleotide sequence ID" value="NM_181449.3"/>
</dbReference>
<dbReference type="SMR" id="Q496F6"/>
<dbReference type="BioGRID" id="131180">
    <property type="interactions" value="18"/>
</dbReference>
<dbReference type="FunCoup" id="Q496F6">
    <property type="interactions" value="532"/>
</dbReference>
<dbReference type="IntAct" id="Q496F6">
    <property type="interactions" value="20"/>
</dbReference>
<dbReference type="MINT" id="Q496F6"/>
<dbReference type="STRING" id="9606.ENSP00000376395"/>
<dbReference type="GlyCosmos" id="Q496F6">
    <property type="glycosylation" value="2 sites, 2 glycans"/>
</dbReference>
<dbReference type="GlyGen" id="Q496F6">
    <property type="glycosylation" value="2 sites, 2 O-linked glycans (1 site)"/>
</dbReference>
<dbReference type="iPTMnet" id="Q496F6"/>
<dbReference type="PhosphoSitePlus" id="Q496F6"/>
<dbReference type="BioMuta" id="CD300E"/>
<dbReference type="DMDM" id="296434454"/>
<dbReference type="MassIVE" id="Q496F6"/>
<dbReference type="PaxDb" id="9606-ENSP00000376395"/>
<dbReference type="PeptideAtlas" id="Q496F6"/>
<dbReference type="ProteomicsDB" id="61989"/>
<dbReference type="Antibodypedia" id="2708">
    <property type="antibodies" value="299 antibodies from 27 providers"/>
</dbReference>
<dbReference type="DNASU" id="342510"/>
<dbReference type="Ensembl" id="ENST00000392619.2">
    <property type="protein sequence ID" value="ENSP00000376395.2"/>
    <property type="gene ID" value="ENSG00000186407.8"/>
</dbReference>
<dbReference type="GeneID" id="342510"/>
<dbReference type="KEGG" id="hsa:342510"/>
<dbReference type="MANE-Select" id="ENST00000392619.2">
    <property type="protein sequence ID" value="ENSP00000376395.2"/>
    <property type="RefSeq nucleotide sequence ID" value="NM_181449.3"/>
    <property type="RefSeq protein sequence ID" value="NP_852114.2"/>
</dbReference>
<dbReference type="UCSC" id="uc002jlb.3">
    <property type="organism name" value="human"/>
</dbReference>
<dbReference type="AGR" id="HGNC:28874"/>
<dbReference type="CTD" id="342510"/>
<dbReference type="DisGeNET" id="342510"/>
<dbReference type="GeneCards" id="CD300E"/>
<dbReference type="HGNC" id="HGNC:28874">
    <property type="gene designation" value="CD300E"/>
</dbReference>
<dbReference type="HPA" id="ENSG00000186407">
    <property type="expression patterns" value="Tissue enhanced (bone marrow, lymphoid tissue)"/>
</dbReference>
<dbReference type="MIM" id="609801">
    <property type="type" value="gene"/>
</dbReference>
<dbReference type="neXtProt" id="NX_Q496F6"/>
<dbReference type="OpenTargets" id="ENSG00000186407"/>
<dbReference type="PharmGKB" id="PA142672152"/>
<dbReference type="VEuPathDB" id="HostDB:ENSG00000186407"/>
<dbReference type="eggNOG" id="ENOG502SRT9">
    <property type="taxonomic scope" value="Eukaryota"/>
</dbReference>
<dbReference type="GeneTree" id="ENSGT00940000162923"/>
<dbReference type="HOGENOM" id="CLU_051023_3_0_1"/>
<dbReference type="InParanoid" id="Q496F6"/>
<dbReference type="OMA" id="WCRIQTV"/>
<dbReference type="OrthoDB" id="8865476at2759"/>
<dbReference type="PAN-GO" id="Q496F6">
    <property type="GO annotations" value="2 GO annotations based on evolutionary models"/>
</dbReference>
<dbReference type="PhylomeDB" id="Q496F6"/>
<dbReference type="TreeFam" id="TF334441"/>
<dbReference type="PathwayCommons" id="Q496F6"/>
<dbReference type="Reactome" id="R-HSA-198933">
    <property type="pathway name" value="Immunoregulatory interactions between a Lymphoid and a non-Lymphoid cell"/>
</dbReference>
<dbReference type="Reactome" id="R-HSA-2172127">
    <property type="pathway name" value="DAP12 interactions"/>
</dbReference>
<dbReference type="SignaLink" id="Q496F6"/>
<dbReference type="BioGRID-ORCS" id="342510">
    <property type="hits" value="7 hits in 651 CRISPR screens"/>
</dbReference>
<dbReference type="GenomeRNAi" id="342510"/>
<dbReference type="Pharos" id="Q496F6">
    <property type="development level" value="Tbio"/>
</dbReference>
<dbReference type="PRO" id="PR:Q496F6"/>
<dbReference type="Proteomes" id="UP000005640">
    <property type="component" value="Chromosome 17"/>
</dbReference>
<dbReference type="RNAct" id="Q496F6">
    <property type="molecule type" value="protein"/>
</dbReference>
<dbReference type="Bgee" id="ENSG00000186407">
    <property type="expression patterns" value="Expressed in monocyte and 94 other cell types or tissues"/>
</dbReference>
<dbReference type="ExpressionAtlas" id="Q496F6">
    <property type="expression patterns" value="baseline and differential"/>
</dbReference>
<dbReference type="GO" id="GO:0005886">
    <property type="term" value="C:plasma membrane"/>
    <property type="evidence" value="ECO:0000318"/>
    <property type="project" value="GO_Central"/>
</dbReference>
<dbReference type="GO" id="GO:0004888">
    <property type="term" value="F:transmembrane signaling receptor activity"/>
    <property type="evidence" value="ECO:0000318"/>
    <property type="project" value="GO_Central"/>
</dbReference>
<dbReference type="GO" id="GO:0002376">
    <property type="term" value="P:immune system process"/>
    <property type="evidence" value="ECO:0007669"/>
    <property type="project" value="UniProtKB-KW"/>
</dbReference>
<dbReference type="GO" id="GO:0045088">
    <property type="term" value="P:regulation of innate immune response"/>
    <property type="evidence" value="ECO:0000318"/>
    <property type="project" value="GO_Central"/>
</dbReference>
<dbReference type="GO" id="GO:0007165">
    <property type="term" value="P:signal transduction"/>
    <property type="evidence" value="ECO:0000318"/>
    <property type="project" value="GO_Central"/>
</dbReference>
<dbReference type="CDD" id="cd05716">
    <property type="entry name" value="IgV_pIgR_like"/>
    <property type="match status" value="1"/>
</dbReference>
<dbReference type="FunFam" id="2.60.40.10:FF:000370">
    <property type="entry name" value="CMRF35-like molecule 1"/>
    <property type="match status" value="1"/>
</dbReference>
<dbReference type="Gene3D" id="2.60.40.10">
    <property type="entry name" value="Immunoglobulins"/>
    <property type="match status" value="1"/>
</dbReference>
<dbReference type="InterPro" id="IPR050671">
    <property type="entry name" value="CD300_family_receptors"/>
</dbReference>
<dbReference type="InterPro" id="IPR007110">
    <property type="entry name" value="Ig-like_dom"/>
</dbReference>
<dbReference type="InterPro" id="IPR036179">
    <property type="entry name" value="Ig-like_dom_sf"/>
</dbReference>
<dbReference type="InterPro" id="IPR013783">
    <property type="entry name" value="Ig-like_fold"/>
</dbReference>
<dbReference type="InterPro" id="IPR003599">
    <property type="entry name" value="Ig_sub"/>
</dbReference>
<dbReference type="InterPro" id="IPR013106">
    <property type="entry name" value="Ig_V-set"/>
</dbReference>
<dbReference type="PANTHER" id="PTHR11860:SF89">
    <property type="entry name" value="CMRF35-LIKE MOLECULE 2"/>
    <property type="match status" value="1"/>
</dbReference>
<dbReference type="PANTHER" id="PTHR11860">
    <property type="entry name" value="POLYMERIC-IMMUNOGLOBULIN RECEPTOR"/>
    <property type="match status" value="1"/>
</dbReference>
<dbReference type="Pfam" id="PF07686">
    <property type="entry name" value="V-set"/>
    <property type="match status" value="1"/>
</dbReference>
<dbReference type="SMART" id="SM00409">
    <property type="entry name" value="IG"/>
    <property type="match status" value="1"/>
</dbReference>
<dbReference type="SUPFAM" id="SSF48726">
    <property type="entry name" value="Immunoglobulin"/>
    <property type="match status" value="1"/>
</dbReference>
<dbReference type="PROSITE" id="PS50835">
    <property type="entry name" value="IG_LIKE"/>
    <property type="match status" value="1"/>
</dbReference>
<feature type="signal peptide" evidence="1">
    <location>
        <begin position="1"/>
        <end position="17"/>
    </location>
</feature>
<feature type="chain" id="PRO_0000320123" description="CMRF35-like molecule 2">
    <location>
        <begin position="18"/>
        <end position="205"/>
    </location>
</feature>
<feature type="topological domain" description="Extracellular" evidence="1">
    <location>
        <begin position="18"/>
        <end position="173"/>
    </location>
</feature>
<feature type="transmembrane region" description="Helical" evidence="1">
    <location>
        <begin position="174"/>
        <end position="194"/>
    </location>
</feature>
<feature type="topological domain" description="Cytoplasmic" evidence="1">
    <location>
        <begin position="195"/>
        <end position="205"/>
    </location>
</feature>
<feature type="domain" description="Ig-like V-type">
    <location>
        <begin position="18"/>
        <end position="120"/>
    </location>
</feature>
<feature type="glycosylation site" description="N-linked (GlcNAc...) asparagine" evidence="1">
    <location>
        <position position="154"/>
    </location>
</feature>
<feature type="disulfide bond" evidence="2">
    <location>
        <begin position="36"/>
        <end position="104"/>
    </location>
</feature>
<feature type="sequence variant" id="VAR_039129" description="In dbSNP:rs581157." evidence="4">
    <original>K</original>
    <variation>T</variation>
    <location>
        <position position="19"/>
    </location>
</feature>
<feature type="sequence variant" id="VAR_039130" description="In a colorectal cancer sample; somatic mutation; dbSNP:rs1278044712." evidence="5">
    <original>T</original>
    <variation>A</variation>
    <location>
        <position position="27"/>
    </location>
</feature>
<feature type="sequence variant" id="VAR_039131" description="In dbSNP:rs1878061." evidence="3 6">
    <original>G</original>
    <variation>R</variation>
    <location>
        <position position="158"/>
    </location>
</feature>
<gene>
    <name type="primary">CD300E</name>
    <name type="synonym">CD300LE</name>
    <name type="synonym">CLM2</name>
    <name type="synonym">CMRF35A5</name>
    <name type="synonym">IREM2</name>
</gene>
<reference key="1">
    <citation type="journal article" date="2004" name="J. Immunol.">
        <title>Molecular characterization of a novel immune receptor restricted to the monocytic lineage.</title>
        <authorList>
            <person name="Aguilar H."/>
            <person name="Alvarez-Errico D."/>
            <person name="Garcia-Montero A.C."/>
            <person name="Orfao A."/>
            <person name="Sayos J."/>
            <person name="Lopez-Botet M."/>
        </authorList>
    </citation>
    <scope>NUCLEOTIDE SEQUENCE [MRNA]</scope>
    <scope>FUNCTION</scope>
    <scope>TISSUE SPECIFICITY</scope>
    <scope>GLYCOSYLATION</scope>
    <scope>INTERACTION WITH TYROBP</scope>
    <scope>VARIANT THR-19</scope>
    <source>
        <tissue>Peripheral blood monocyte</tissue>
    </source>
</reference>
<reference key="2">
    <citation type="journal article" date="2004" name="Nat. Genet.">
        <title>Complete sequencing and characterization of 21,243 full-length human cDNAs.</title>
        <authorList>
            <person name="Ota T."/>
            <person name="Suzuki Y."/>
            <person name="Nishikawa T."/>
            <person name="Otsuki T."/>
            <person name="Sugiyama T."/>
            <person name="Irie R."/>
            <person name="Wakamatsu A."/>
            <person name="Hayashi K."/>
            <person name="Sato H."/>
            <person name="Nagai K."/>
            <person name="Kimura K."/>
            <person name="Makita H."/>
            <person name="Sekine M."/>
            <person name="Obayashi M."/>
            <person name="Nishi T."/>
            <person name="Shibahara T."/>
            <person name="Tanaka T."/>
            <person name="Ishii S."/>
            <person name="Yamamoto J."/>
            <person name="Saito K."/>
            <person name="Kawai Y."/>
            <person name="Isono Y."/>
            <person name="Nakamura Y."/>
            <person name="Nagahari K."/>
            <person name="Murakami K."/>
            <person name="Yasuda T."/>
            <person name="Iwayanagi T."/>
            <person name="Wagatsuma M."/>
            <person name="Shiratori A."/>
            <person name="Sudo H."/>
            <person name="Hosoiri T."/>
            <person name="Kaku Y."/>
            <person name="Kodaira H."/>
            <person name="Kondo H."/>
            <person name="Sugawara M."/>
            <person name="Takahashi M."/>
            <person name="Kanda K."/>
            <person name="Yokoi T."/>
            <person name="Furuya T."/>
            <person name="Kikkawa E."/>
            <person name="Omura Y."/>
            <person name="Abe K."/>
            <person name="Kamihara K."/>
            <person name="Katsuta N."/>
            <person name="Sato K."/>
            <person name="Tanikawa M."/>
            <person name="Yamazaki M."/>
            <person name="Ninomiya K."/>
            <person name="Ishibashi T."/>
            <person name="Yamashita H."/>
            <person name="Murakawa K."/>
            <person name="Fujimori K."/>
            <person name="Tanai H."/>
            <person name="Kimata M."/>
            <person name="Watanabe M."/>
            <person name="Hiraoka S."/>
            <person name="Chiba Y."/>
            <person name="Ishida S."/>
            <person name="Ono Y."/>
            <person name="Takiguchi S."/>
            <person name="Watanabe S."/>
            <person name="Yosida M."/>
            <person name="Hotuta T."/>
            <person name="Kusano J."/>
            <person name="Kanehori K."/>
            <person name="Takahashi-Fujii A."/>
            <person name="Hara H."/>
            <person name="Tanase T.-O."/>
            <person name="Nomura Y."/>
            <person name="Togiya S."/>
            <person name="Komai F."/>
            <person name="Hara R."/>
            <person name="Takeuchi K."/>
            <person name="Arita M."/>
            <person name="Imose N."/>
            <person name="Musashino K."/>
            <person name="Yuuki H."/>
            <person name="Oshima A."/>
            <person name="Sasaki N."/>
            <person name="Aotsuka S."/>
            <person name="Yoshikawa Y."/>
            <person name="Matsunawa H."/>
            <person name="Ichihara T."/>
            <person name="Shiohata N."/>
            <person name="Sano S."/>
            <person name="Moriya S."/>
            <person name="Momiyama H."/>
            <person name="Satoh N."/>
            <person name="Takami S."/>
            <person name="Terashima Y."/>
            <person name="Suzuki O."/>
            <person name="Nakagawa S."/>
            <person name="Senoh A."/>
            <person name="Mizoguchi H."/>
            <person name="Goto Y."/>
            <person name="Shimizu F."/>
            <person name="Wakebe H."/>
            <person name="Hishigaki H."/>
            <person name="Watanabe T."/>
            <person name="Sugiyama A."/>
            <person name="Takemoto M."/>
            <person name="Kawakami B."/>
            <person name="Yamazaki M."/>
            <person name="Watanabe K."/>
            <person name="Kumagai A."/>
            <person name="Itakura S."/>
            <person name="Fukuzumi Y."/>
            <person name="Fujimori Y."/>
            <person name="Komiyama M."/>
            <person name="Tashiro H."/>
            <person name="Tanigami A."/>
            <person name="Fujiwara T."/>
            <person name="Ono T."/>
            <person name="Yamada K."/>
            <person name="Fujii Y."/>
            <person name="Ozaki K."/>
            <person name="Hirao M."/>
            <person name="Ohmori Y."/>
            <person name="Kawabata A."/>
            <person name="Hikiji T."/>
            <person name="Kobatake N."/>
            <person name="Inagaki H."/>
            <person name="Ikema Y."/>
            <person name="Okamoto S."/>
            <person name="Okitani R."/>
            <person name="Kawakami T."/>
            <person name="Noguchi S."/>
            <person name="Itoh T."/>
            <person name="Shigeta K."/>
            <person name="Senba T."/>
            <person name="Matsumura K."/>
            <person name="Nakajima Y."/>
            <person name="Mizuno T."/>
            <person name="Morinaga M."/>
            <person name="Sasaki M."/>
            <person name="Togashi T."/>
            <person name="Oyama M."/>
            <person name="Hata H."/>
            <person name="Watanabe M."/>
            <person name="Komatsu T."/>
            <person name="Mizushima-Sugano J."/>
            <person name="Satoh T."/>
            <person name="Shirai Y."/>
            <person name="Takahashi Y."/>
            <person name="Nakagawa K."/>
            <person name="Okumura K."/>
            <person name="Nagase T."/>
            <person name="Nomura N."/>
            <person name="Kikuchi H."/>
            <person name="Masuho Y."/>
            <person name="Yamashita R."/>
            <person name="Nakai K."/>
            <person name="Yada T."/>
            <person name="Nakamura Y."/>
            <person name="Ohara O."/>
            <person name="Isogai T."/>
            <person name="Sugano S."/>
        </authorList>
    </citation>
    <scope>NUCLEOTIDE SEQUENCE [LARGE SCALE MRNA]</scope>
    <source>
        <tissue>Lung</tissue>
    </source>
</reference>
<reference key="3">
    <citation type="journal article" date="2006" name="Nature">
        <title>DNA sequence of human chromosome 17 and analysis of rearrangement in the human lineage.</title>
        <authorList>
            <person name="Zody M.C."/>
            <person name="Garber M."/>
            <person name="Adams D.J."/>
            <person name="Sharpe T."/>
            <person name="Harrow J."/>
            <person name="Lupski J.R."/>
            <person name="Nicholson C."/>
            <person name="Searle S.M."/>
            <person name="Wilming L."/>
            <person name="Young S.K."/>
            <person name="Abouelleil A."/>
            <person name="Allen N.R."/>
            <person name="Bi W."/>
            <person name="Bloom T."/>
            <person name="Borowsky M.L."/>
            <person name="Bugalter B.E."/>
            <person name="Butler J."/>
            <person name="Chang J.L."/>
            <person name="Chen C.-K."/>
            <person name="Cook A."/>
            <person name="Corum B."/>
            <person name="Cuomo C.A."/>
            <person name="de Jong P.J."/>
            <person name="DeCaprio D."/>
            <person name="Dewar K."/>
            <person name="FitzGerald M."/>
            <person name="Gilbert J."/>
            <person name="Gibson R."/>
            <person name="Gnerre S."/>
            <person name="Goldstein S."/>
            <person name="Grafham D.V."/>
            <person name="Grocock R."/>
            <person name="Hafez N."/>
            <person name="Hagopian D.S."/>
            <person name="Hart E."/>
            <person name="Norman C.H."/>
            <person name="Humphray S."/>
            <person name="Jaffe D.B."/>
            <person name="Jones M."/>
            <person name="Kamal M."/>
            <person name="Khodiyar V.K."/>
            <person name="LaButti K."/>
            <person name="Laird G."/>
            <person name="Lehoczky J."/>
            <person name="Liu X."/>
            <person name="Lokyitsang T."/>
            <person name="Loveland J."/>
            <person name="Lui A."/>
            <person name="Macdonald P."/>
            <person name="Major J.E."/>
            <person name="Matthews L."/>
            <person name="Mauceli E."/>
            <person name="McCarroll S.A."/>
            <person name="Mihalev A.H."/>
            <person name="Mudge J."/>
            <person name="Nguyen C."/>
            <person name="Nicol R."/>
            <person name="O'Leary S.B."/>
            <person name="Osoegawa K."/>
            <person name="Schwartz D.C."/>
            <person name="Shaw-Smith C."/>
            <person name="Stankiewicz P."/>
            <person name="Steward C."/>
            <person name="Swarbreck D."/>
            <person name="Venkataraman V."/>
            <person name="Whittaker C.A."/>
            <person name="Yang X."/>
            <person name="Zimmer A.R."/>
            <person name="Bradley A."/>
            <person name="Hubbard T."/>
            <person name="Birren B.W."/>
            <person name="Rogers J."/>
            <person name="Lander E.S."/>
            <person name="Nusbaum C."/>
        </authorList>
    </citation>
    <scope>NUCLEOTIDE SEQUENCE [LARGE SCALE GENOMIC DNA]</scope>
</reference>
<reference key="4">
    <citation type="submission" date="2005-07" db="EMBL/GenBank/DDBJ databases">
        <authorList>
            <person name="Mural R.J."/>
            <person name="Istrail S."/>
            <person name="Sutton G.G."/>
            <person name="Florea L."/>
            <person name="Halpern A.L."/>
            <person name="Mobarry C.M."/>
            <person name="Lippert R."/>
            <person name="Walenz B."/>
            <person name="Shatkay H."/>
            <person name="Dew I."/>
            <person name="Miller J.R."/>
            <person name="Flanigan M.J."/>
            <person name="Edwards N.J."/>
            <person name="Bolanos R."/>
            <person name="Fasulo D."/>
            <person name="Halldorsson B.V."/>
            <person name="Hannenhalli S."/>
            <person name="Turner R."/>
            <person name="Yooseph S."/>
            <person name="Lu F."/>
            <person name="Nusskern D.R."/>
            <person name="Shue B.C."/>
            <person name="Zheng X.H."/>
            <person name="Zhong F."/>
            <person name="Delcher A.L."/>
            <person name="Huson D.H."/>
            <person name="Kravitz S.A."/>
            <person name="Mouchard L."/>
            <person name="Reinert K."/>
            <person name="Remington K.A."/>
            <person name="Clark A.G."/>
            <person name="Waterman M.S."/>
            <person name="Eichler E.E."/>
            <person name="Adams M.D."/>
            <person name="Hunkapiller M.W."/>
            <person name="Myers E.W."/>
            <person name="Venter J.C."/>
        </authorList>
    </citation>
    <scope>NUCLEOTIDE SEQUENCE [LARGE SCALE GENOMIC DNA]</scope>
    <scope>VARIANT ARG-158</scope>
</reference>
<reference key="5">
    <citation type="journal article" date="2004" name="Genome Res.">
        <title>The status, quality, and expansion of the NIH full-length cDNA project: the Mammalian Gene Collection (MGC).</title>
        <authorList>
            <consortium name="The MGC Project Team"/>
        </authorList>
    </citation>
    <scope>NUCLEOTIDE SEQUENCE [LARGE SCALE MRNA]</scope>
    <scope>VARIANT ARG-158</scope>
</reference>
<reference key="6">
    <citation type="journal article" date="2003" name="Hum. Genet.">
        <title>Novel immunoglobulin superfamily gene cluster, mapping to a region of human chromosome 17q25, linked to psoriasis susceptibility.</title>
        <authorList>
            <person name="Speckman R.A."/>
            <person name="Wright Daw J.A."/>
            <person name="Helms C."/>
            <person name="Duan S."/>
            <person name="Cao L."/>
            <person name="Taillon-Miller P."/>
            <person name="Kwok P.Y."/>
            <person name="Menter A."/>
            <person name="Bowcock A.M."/>
        </authorList>
    </citation>
    <scope>IDENTIFICATION</scope>
</reference>
<reference key="7">
    <citation type="journal article" date="2006" name="Science">
        <title>The consensus coding sequences of human breast and colorectal cancers.</title>
        <authorList>
            <person name="Sjoeblom T."/>
            <person name="Jones S."/>
            <person name="Wood L.D."/>
            <person name="Parsons D.W."/>
            <person name="Lin J."/>
            <person name="Barber T.D."/>
            <person name="Mandelker D."/>
            <person name="Leary R.J."/>
            <person name="Ptak J."/>
            <person name="Silliman N."/>
            <person name="Szabo S."/>
            <person name="Buckhaults P."/>
            <person name="Farrell C."/>
            <person name="Meeh P."/>
            <person name="Markowitz S.D."/>
            <person name="Willis J."/>
            <person name="Dawson D."/>
            <person name="Willson J.K.V."/>
            <person name="Gazdar A.F."/>
            <person name="Hartigan J."/>
            <person name="Wu L."/>
            <person name="Liu C."/>
            <person name="Parmigiani G."/>
            <person name="Park B.H."/>
            <person name="Bachman K.E."/>
            <person name="Papadopoulos N."/>
            <person name="Vogelstein B."/>
            <person name="Kinzler K.W."/>
            <person name="Velculescu V.E."/>
        </authorList>
    </citation>
    <scope>VARIANT [LARGE SCALE ANALYSIS] ALA-27</scope>
</reference>
<organism>
    <name type="scientific">Homo sapiens</name>
    <name type="common">Human</name>
    <dbReference type="NCBI Taxonomy" id="9606"/>
    <lineage>
        <taxon>Eukaryota</taxon>
        <taxon>Metazoa</taxon>
        <taxon>Chordata</taxon>
        <taxon>Craniata</taxon>
        <taxon>Vertebrata</taxon>
        <taxon>Euteleostomi</taxon>
        <taxon>Mammalia</taxon>
        <taxon>Eutheria</taxon>
        <taxon>Euarchontoglires</taxon>
        <taxon>Primates</taxon>
        <taxon>Haplorrhini</taxon>
        <taxon>Catarrhini</taxon>
        <taxon>Hominidae</taxon>
        <taxon>Homo</taxon>
    </lineage>
</organism>
<name>CLM2_HUMAN</name>
<comment type="function">
    <text evidence="4">Probably acts as an activating receptor.</text>
</comment>
<comment type="subunit">
    <text evidence="4">Interacts with TYROBP.</text>
</comment>
<comment type="interaction">
    <interactant intactId="EBI-18010148">
        <id>Q496F6</id>
    </interactant>
    <interactant intactId="EBI-26499879">
        <id>A8K4G0</id>
        <label>CD300LB</label>
    </interactant>
    <organismsDiffer>false</organismsDiffer>
    <experiments>2</experiments>
</comment>
<comment type="interaction">
    <interactant intactId="EBI-18010148">
        <id>Q496F6</id>
    </interactant>
    <interactant intactId="EBI-12019274">
        <id>Q4LDR2</id>
        <label>CTXN3</label>
    </interactant>
    <organismsDiffer>false</organismsDiffer>
    <experiments>3</experiments>
</comment>
<comment type="interaction">
    <interactant intactId="EBI-18010148">
        <id>Q496F6</id>
    </interactant>
    <interactant intactId="EBI-727240">
        <id>Q9UNK0</id>
        <label>STX8</label>
    </interactant>
    <organismsDiffer>false</organismsDiffer>
    <experiments>3</experiments>
</comment>
<comment type="interaction">
    <interactant intactId="EBI-18010148">
        <id>Q496F6</id>
    </interactant>
    <interactant intactId="EBI-11988865">
        <id>A5PKU2</id>
        <label>TUSC5</label>
    </interactant>
    <organismsDiffer>false</organismsDiffer>
    <experiments>3</experiments>
</comment>
<comment type="subcellular location">
    <subcellularLocation>
        <location>Cell membrane</location>
        <topology>Single-pass type I membrane protein</topology>
    </subcellularLocation>
</comment>
<comment type="tissue specificity">
    <text evidence="4">Present on the surface of mature hematopoietic cells of the monocyte and myeloid lineages (at protein level).</text>
</comment>
<comment type="PTM">
    <text evidence="4">N-glycosylated.</text>
</comment>
<comment type="similarity">
    <text evidence="7">Belongs to the CD300 family.</text>
</comment>
<proteinExistence type="evidence at protein level"/>